<protein>
    <recommendedName>
        <fullName evidence="1">Probable potassium transport system protein Kup</fullName>
    </recommendedName>
</protein>
<evidence type="ECO:0000255" key="1">
    <source>
        <dbReference type="HAMAP-Rule" id="MF_01522"/>
    </source>
</evidence>
<evidence type="ECO:0000305" key="2"/>
<name>KUP_BURTA</name>
<proteinExistence type="inferred from homology"/>
<feature type="chain" id="PRO_0000279774" description="Probable potassium transport system protein Kup">
    <location>
        <begin position="1"/>
        <end position="630"/>
    </location>
</feature>
<feature type="transmembrane region" description="Helical" evidence="1">
    <location>
        <begin position="17"/>
        <end position="37"/>
    </location>
</feature>
<feature type="transmembrane region" description="Helical" evidence="1">
    <location>
        <begin position="51"/>
        <end position="71"/>
    </location>
</feature>
<feature type="transmembrane region" description="Helical" evidence="1">
    <location>
        <begin position="105"/>
        <end position="125"/>
    </location>
</feature>
<feature type="transmembrane region" description="Helical" evidence="1">
    <location>
        <begin position="144"/>
        <end position="164"/>
    </location>
</feature>
<feature type="transmembrane region" description="Helical" evidence="1">
    <location>
        <begin position="175"/>
        <end position="195"/>
    </location>
</feature>
<feature type="transmembrane region" description="Helical" evidence="1">
    <location>
        <begin position="218"/>
        <end position="238"/>
    </location>
</feature>
<feature type="transmembrane region" description="Helical" evidence="1">
    <location>
        <begin position="255"/>
        <end position="275"/>
    </location>
</feature>
<feature type="transmembrane region" description="Helical" evidence="1">
    <location>
        <begin position="283"/>
        <end position="303"/>
    </location>
</feature>
<feature type="transmembrane region" description="Helical" evidence="1">
    <location>
        <begin position="344"/>
        <end position="364"/>
    </location>
</feature>
<feature type="transmembrane region" description="Helical" evidence="1">
    <location>
        <begin position="374"/>
        <end position="394"/>
    </location>
</feature>
<feature type="transmembrane region" description="Helical" evidence="1">
    <location>
        <begin position="402"/>
        <end position="422"/>
    </location>
</feature>
<feature type="transmembrane region" description="Helical" evidence="1">
    <location>
        <begin position="428"/>
        <end position="448"/>
    </location>
</feature>
<accession>Q2SWD1</accession>
<organism>
    <name type="scientific">Burkholderia thailandensis (strain ATCC 700388 / DSM 13276 / CCUG 48851 / CIP 106301 / E264)</name>
    <dbReference type="NCBI Taxonomy" id="271848"/>
    <lineage>
        <taxon>Bacteria</taxon>
        <taxon>Pseudomonadati</taxon>
        <taxon>Pseudomonadota</taxon>
        <taxon>Betaproteobacteria</taxon>
        <taxon>Burkholderiales</taxon>
        <taxon>Burkholderiaceae</taxon>
        <taxon>Burkholderia</taxon>
        <taxon>pseudomallei group</taxon>
    </lineage>
</organism>
<gene>
    <name evidence="1" type="primary">kup</name>
    <name type="ordered locus">BTH_I2247</name>
</gene>
<dbReference type="EMBL" id="CP000086">
    <property type="protein sequence ID" value="ABC36940.1"/>
    <property type="status" value="ALT_INIT"/>
    <property type="molecule type" value="Genomic_DNA"/>
</dbReference>
<dbReference type="RefSeq" id="WP_009890848.1">
    <property type="nucleotide sequence ID" value="NC_007651.1"/>
</dbReference>
<dbReference type="GeneID" id="45121965"/>
<dbReference type="KEGG" id="bte:BTH_I2247"/>
<dbReference type="HOGENOM" id="CLU_008142_4_2_4"/>
<dbReference type="Proteomes" id="UP000001930">
    <property type="component" value="Chromosome I"/>
</dbReference>
<dbReference type="GO" id="GO:0005886">
    <property type="term" value="C:plasma membrane"/>
    <property type="evidence" value="ECO:0007669"/>
    <property type="project" value="UniProtKB-SubCell"/>
</dbReference>
<dbReference type="GO" id="GO:0015079">
    <property type="term" value="F:potassium ion transmembrane transporter activity"/>
    <property type="evidence" value="ECO:0007669"/>
    <property type="project" value="UniProtKB-UniRule"/>
</dbReference>
<dbReference type="GO" id="GO:0015293">
    <property type="term" value="F:symporter activity"/>
    <property type="evidence" value="ECO:0007669"/>
    <property type="project" value="UniProtKB-UniRule"/>
</dbReference>
<dbReference type="HAMAP" id="MF_01522">
    <property type="entry name" value="Kup"/>
    <property type="match status" value="1"/>
</dbReference>
<dbReference type="InterPro" id="IPR003855">
    <property type="entry name" value="K+_transporter"/>
</dbReference>
<dbReference type="InterPro" id="IPR053952">
    <property type="entry name" value="K_trans_C"/>
</dbReference>
<dbReference type="InterPro" id="IPR053951">
    <property type="entry name" value="K_trans_N"/>
</dbReference>
<dbReference type="InterPro" id="IPR023051">
    <property type="entry name" value="Kup"/>
</dbReference>
<dbReference type="PANTHER" id="PTHR30540:SF79">
    <property type="entry name" value="LOW AFFINITY POTASSIUM TRANSPORT SYSTEM PROTEIN KUP"/>
    <property type="match status" value="1"/>
</dbReference>
<dbReference type="PANTHER" id="PTHR30540">
    <property type="entry name" value="OSMOTIC STRESS POTASSIUM TRANSPORTER"/>
    <property type="match status" value="1"/>
</dbReference>
<dbReference type="Pfam" id="PF02705">
    <property type="entry name" value="K_trans"/>
    <property type="match status" value="1"/>
</dbReference>
<dbReference type="Pfam" id="PF22776">
    <property type="entry name" value="K_trans_C"/>
    <property type="match status" value="1"/>
</dbReference>
<reference key="1">
    <citation type="journal article" date="2005" name="BMC Genomics">
        <title>Bacterial genome adaptation to niches: divergence of the potential virulence genes in three Burkholderia species of different survival strategies.</title>
        <authorList>
            <person name="Kim H.S."/>
            <person name="Schell M.A."/>
            <person name="Yu Y."/>
            <person name="Ulrich R.L."/>
            <person name="Sarria S.H."/>
            <person name="Nierman W.C."/>
            <person name="DeShazer D."/>
        </authorList>
    </citation>
    <scope>NUCLEOTIDE SEQUENCE [LARGE SCALE GENOMIC DNA]</scope>
    <source>
        <strain>ATCC 700388 / DSM 13276 / CCUG 48851 / CIP 106301 / E264</strain>
    </source>
</reference>
<sequence>MTDTNHSSMRQHSLQSLAIAAIGVVFGDIGTSPLYSLKEAFSPAHGIPLTPSAILGVISLLFWAIILVVGIKYVLFVMRADNNGEGGVLALMALSLRPLNPKSRITGLMMALGIFGACMFYGDAVITPAISVMSAVEGLEVATPQLSHLVLPITIVILIALFWIQRHGTATVGKLFGPIMVIWFVTIAALGVYHIARAPMIVSAINPYYAFSFMSEHVLLAYVVLGSVVLVLTGAEALYADMGHFGAKPIRLAAYVLVMPSLVLNYFGQGALLLLDPKAIENPFFLLAPQWAALPLVVLSTVATVIASQAVISGAYSLTSQAIQLGYVPRMKILHTSELAIGQIYVPVVNWLLLFVILCIVIGFKSSDNLAAAYGIAVTATMVITTILAAVVMVKVWNWNKLLVAMIIGVFLVIDLGFFGANLLKVEQGGWLPLGIGALLFFLLMTWYKGRHIVKERTAADGIPLAPFLQGLLAHPPHRVSGTAIYLTGNDTLVPVSLLHNLKHNKVLHERTIFMTFVTRDIPYVKDDERVTVHDAGEGLYIVKAEYGFNETPDVKAVLEEVSCQRAMTFELMDTSFFLARETVVPTHLPGMSIWRERVFAWMHQNAAKPTDFFAIPANRVVELGTKIEI</sequence>
<comment type="function">
    <text evidence="1">Transport of potassium into the cell. Likely operates as a K(+):H(+) symporter.</text>
</comment>
<comment type="catalytic activity">
    <reaction evidence="1">
        <text>K(+)(in) + H(+)(in) = K(+)(out) + H(+)(out)</text>
        <dbReference type="Rhea" id="RHEA:28490"/>
        <dbReference type="ChEBI" id="CHEBI:15378"/>
        <dbReference type="ChEBI" id="CHEBI:29103"/>
    </reaction>
    <physiologicalReaction direction="right-to-left" evidence="1">
        <dbReference type="Rhea" id="RHEA:28492"/>
    </physiologicalReaction>
</comment>
<comment type="subcellular location">
    <subcellularLocation>
        <location evidence="1">Cell inner membrane</location>
        <topology evidence="1">Multi-pass membrane protein</topology>
    </subcellularLocation>
</comment>
<comment type="similarity">
    <text evidence="1">Belongs to the HAK/KUP transporter (TC 2.A.72) family.</text>
</comment>
<comment type="sequence caution" evidence="2">
    <conflict type="erroneous initiation">
        <sequence resource="EMBL-CDS" id="ABC36940"/>
    </conflict>
</comment>
<keyword id="KW-0997">Cell inner membrane</keyword>
<keyword id="KW-1003">Cell membrane</keyword>
<keyword id="KW-0406">Ion transport</keyword>
<keyword id="KW-0472">Membrane</keyword>
<keyword id="KW-0630">Potassium</keyword>
<keyword id="KW-0633">Potassium transport</keyword>
<keyword id="KW-0769">Symport</keyword>
<keyword id="KW-0812">Transmembrane</keyword>
<keyword id="KW-1133">Transmembrane helix</keyword>
<keyword id="KW-0813">Transport</keyword>